<gene>
    <name evidence="1" type="primary">aroQ</name>
    <name type="ordered locus">OCAR_5981</name>
    <name type="ordered locus">OCA5_c20430</name>
</gene>
<organism>
    <name type="scientific">Afipia carboxidovorans (strain ATCC 49405 / DSM 1227 / KCTC 32145 / OM5)</name>
    <name type="common">Oligotropha carboxidovorans</name>
    <dbReference type="NCBI Taxonomy" id="504832"/>
    <lineage>
        <taxon>Bacteria</taxon>
        <taxon>Pseudomonadati</taxon>
        <taxon>Pseudomonadota</taxon>
        <taxon>Alphaproteobacteria</taxon>
        <taxon>Hyphomicrobiales</taxon>
        <taxon>Nitrobacteraceae</taxon>
        <taxon>Afipia</taxon>
    </lineage>
</organism>
<dbReference type="EC" id="4.2.1.10" evidence="1"/>
<dbReference type="EMBL" id="CP001196">
    <property type="protein sequence ID" value="ACI93101.1"/>
    <property type="molecule type" value="Genomic_DNA"/>
</dbReference>
<dbReference type="EMBL" id="CP002826">
    <property type="protein sequence ID" value="AEI06750.1"/>
    <property type="molecule type" value="Genomic_DNA"/>
</dbReference>
<dbReference type="RefSeq" id="WP_012563128.1">
    <property type="nucleotide sequence ID" value="NC_015684.1"/>
</dbReference>
<dbReference type="SMR" id="B6JHG1"/>
<dbReference type="STRING" id="504832.OCA5_c20430"/>
<dbReference type="KEGG" id="oca:OCAR_5981"/>
<dbReference type="KEGG" id="ocg:OCA5_c20430"/>
<dbReference type="PATRIC" id="fig|504832.7.peg.2163"/>
<dbReference type="eggNOG" id="COG0757">
    <property type="taxonomic scope" value="Bacteria"/>
</dbReference>
<dbReference type="HOGENOM" id="CLU_090968_3_0_5"/>
<dbReference type="OrthoDB" id="9790793at2"/>
<dbReference type="UniPathway" id="UPA00053">
    <property type="reaction ID" value="UER00086"/>
</dbReference>
<dbReference type="Proteomes" id="UP000007730">
    <property type="component" value="Chromosome"/>
</dbReference>
<dbReference type="GO" id="GO:0003855">
    <property type="term" value="F:3-dehydroquinate dehydratase activity"/>
    <property type="evidence" value="ECO:0007669"/>
    <property type="project" value="UniProtKB-UniRule"/>
</dbReference>
<dbReference type="GO" id="GO:0008652">
    <property type="term" value="P:amino acid biosynthetic process"/>
    <property type="evidence" value="ECO:0007669"/>
    <property type="project" value="UniProtKB-KW"/>
</dbReference>
<dbReference type="GO" id="GO:0009073">
    <property type="term" value="P:aromatic amino acid family biosynthetic process"/>
    <property type="evidence" value="ECO:0007669"/>
    <property type="project" value="UniProtKB-KW"/>
</dbReference>
<dbReference type="GO" id="GO:0009423">
    <property type="term" value="P:chorismate biosynthetic process"/>
    <property type="evidence" value="ECO:0007669"/>
    <property type="project" value="UniProtKB-UniRule"/>
</dbReference>
<dbReference type="GO" id="GO:0019631">
    <property type="term" value="P:quinate catabolic process"/>
    <property type="evidence" value="ECO:0007669"/>
    <property type="project" value="TreeGrafter"/>
</dbReference>
<dbReference type="CDD" id="cd00466">
    <property type="entry name" value="DHQase_II"/>
    <property type="match status" value="1"/>
</dbReference>
<dbReference type="Gene3D" id="3.40.50.9100">
    <property type="entry name" value="Dehydroquinase, class II"/>
    <property type="match status" value="1"/>
</dbReference>
<dbReference type="HAMAP" id="MF_00169">
    <property type="entry name" value="AroQ"/>
    <property type="match status" value="1"/>
</dbReference>
<dbReference type="InterPro" id="IPR001874">
    <property type="entry name" value="DHquinase_II"/>
</dbReference>
<dbReference type="InterPro" id="IPR018509">
    <property type="entry name" value="DHquinase_II_CS"/>
</dbReference>
<dbReference type="InterPro" id="IPR036441">
    <property type="entry name" value="DHquinase_II_sf"/>
</dbReference>
<dbReference type="NCBIfam" id="TIGR01088">
    <property type="entry name" value="aroQ"/>
    <property type="match status" value="1"/>
</dbReference>
<dbReference type="NCBIfam" id="NF003805">
    <property type="entry name" value="PRK05395.1-2"/>
    <property type="match status" value="1"/>
</dbReference>
<dbReference type="NCBIfam" id="NF003806">
    <property type="entry name" value="PRK05395.1-3"/>
    <property type="match status" value="1"/>
</dbReference>
<dbReference type="NCBIfam" id="NF003807">
    <property type="entry name" value="PRK05395.1-4"/>
    <property type="match status" value="1"/>
</dbReference>
<dbReference type="PANTHER" id="PTHR21272">
    <property type="entry name" value="CATABOLIC 3-DEHYDROQUINASE"/>
    <property type="match status" value="1"/>
</dbReference>
<dbReference type="PANTHER" id="PTHR21272:SF3">
    <property type="entry name" value="CATABOLIC 3-DEHYDROQUINASE"/>
    <property type="match status" value="1"/>
</dbReference>
<dbReference type="Pfam" id="PF01220">
    <property type="entry name" value="DHquinase_II"/>
    <property type="match status" value="1"/>
</dbReference>
<dbReference type="PIRSF" id="PIRSF001399">
    <property type="entry name" value="DHquinase_II"/>
    <property type="match status" value="1"/>
</dbReference>
<dbReference type="SUPFAM" id="SSF52304">
    <property type="entry name" value="Type II 3-dehydroquinate dehydratase"/>
    <property type="match status" value="1"/>
</dbReference>
<dbReference type="PROSITE" id="PS01029">
    <property type="entry name" value="DEHYDROQUINASE_II"/>
    <property type="match status" value="1"/>
</dbReference>
<feature type="chain" id="PRO_1000097610" description="3-dehydroquinate dehydratase">
    <location>
        <begin position="1"/>
        <end position="151"/>
    </location>
</feature>
<feature type="active site" description="Proton acceptor" evidence="1">
    <location>
        <position position="24"/>
    </location>
</feature>
<feature type="active site" description="Proton donor" evidence="1">
    <location>
        <position position="102"/>
    </location>
</feature>
<feature type="binding site" evidence="1">
    <location>
        <position position="76"/>
    </location>
    <ligand>
        <name>substrate</name>
    </ligand>
</feature>
<feature type="binding site" evidence="1">
    <location>
        <position position="82"/>
    </location>
    <ligand>
        <name>substrate</name>
    </ligand>
</feature>
<feature type="binding site" evidence="1">
    <location>
        <position position="89"/>
    </location>
    <ligand>
        <name>substrate</name>
    </ligand>
</feature>
<feature type="binding site" evidence="1">
    <location>
        <begin position="103"/>
        <end position="104"/>
    </location>
    <ligand>
        <name>substrate</name>
    </ligand>
</feature>
<feature type="binding site" evidence="1">
    <location>
        <position position="113"/>
    </location>
    <ligand>
        <name>substrate</name>
    </ligand>
</feature>
<feature type="site" description="Transition state stabilizer" evidence="1">
    <location>
        <position position="19"/>
    </location>
</feature>
<proteinExistence type="inferred from homology"/>
<sequence>MTKTIYVLNGPNLNLLGTREPDIYGHHTLADVEALCRETAARFGLEAVCHQTNREGEIVDLIHEAAKKQAAGLIINGGGYSHTSVAIHDAIVGVQIPTVEVHVSNVYARERFRHQSFIAKAAFATLCGFGIEGYRLAILGLAARIGLAAKT</sequence>
<accession>B6JHG1</accession>
<accession>F8BW39</accession>
<evidence type="ECO:0000255" key="1">
    <source>
        <dbReference type="HAMAP-Rule" id="MF_00169"/>
    </source>
</evidence>
<comment type="function">
    <text evidence="1">Catalyzes a trans-dehydration via an enolate intermediate.</text>
</comment>
<comment type="catalytic activity">
    <reaction evidence="1">
        <text>3-dehydroquinate = 3-dehydroshikimate + H2O</text>
        <dbReference type="Rhea" id="RHEA:21096"/>
        <dbReference type="ChEBI" id="CHEBI:15377"/>
        <dbReference type="ChEBI" id="CHEBI:16630"/>
        <dbReference type="ChEBI" id="CHEBI:32364"/>
        <dbReference type="EC" id="4.2.1.10"/>
    </reaction>
</comment>
<comment type="pathway">
    <text evidence="1">Metabolic intermediate biosynthesis; chorismate biosynthesis; chorismate from D-erythrose 4-phosphate and phosphoenolpyruvate: step 3/7.</text>
</comment>
<comment type="subunit">
    <text evidence="1">Homododecamer.</text>
</comment>
<comment type="similarity">
    <text evidence="1">Belongs to the type-II 3-dehydroquinase family.</text>
</comment>
<keyword id="KW-0028">Amino-acid biosynthesis</keyword>
<keyword id="KW-0057">Aromatic amino acid biosynthesis</keyword>
<keyword id="KW-0456">Lyase</keyword>
<keyword id="KW-1185">Reference proteome</keyword>
<name>AROQ_AFIC5</name>
<protein>
    <recommendedName>
        <fullName evidence="1">3-dehydroquinate dehydratase</fullName>
        <shortName evidence="1">3-dehydroquinase</shortName>
        <ecNumber evidence="1">4.2.1.10</ecNumber>
    </recommendedName>
    <alternativeName>
        <fullName evidence="1">Type II DHQase</fullName>
    </alternativeName>
</protein>
<reference key="1">
    <citation type="journal article" date="2008" name="J. Bacteriol.">
        <title>Genome sequence of the chemolithoautotrophic bacterium Oligotropha carboxidovorans OM5T.</title>
        <authorList>
            <person name="Paul D."/>
            <person name="Bridges S."/>
            <person name="Burgess S.C."/>
            <person name="Dandass Y."/>
            <person name="Lawrence M.L."/>
        </authorList>
    </citation>
    <scope>NUCLEOTIDE SEQUENCE [LARGE SCALE GENOMIC DNA]</scope>
    <source>
        <strain>ATCC 49405 / DSM 1227 / KCTC 32145 / OM5</strain>
    </source>
</reference>
<reference key="2">
    <citation type="journal article" date="2011" name="J. Bacteriol.">
        <title>Complete genome sequences of the chemolithoautotrophic Oligotropha carboxidovorans strains OM4 and OM5.</title>
        <authorList>
            <person name="Volland S."/>
            <person name="Rachinger M."/>
            <person name="Strittmatter A."/>
            <person name="Daniel R."/>
            <person name="Gottschalk G."/>
            <person name="Meyer O."/>
        </authorList>
    </citation>
    <scope>NUCLEOTIDE SEQUENCE [LARGE SCALE GENOMIC DNA]</scope>
    <source>
        <strain>ATCC 49405 / DSM 1227 / KCTC 32145 / OM5</strain>
    </source>
</reference>